<gene>
    <name type="ordered locus">At2g46850</name>
    <name type="ORF">F19D11.13</name>
</gene>
<comment type="subcellular location">
    <subcellularLocation>
        <location evidence="3">Membrane</location>
        <topology evidence="3">Single-pass type I membrane protein</topology>
    </subcellularLocation>
</comment>
<comment type="domain">
    <text>The protein kinase domain is predicted to be catalytically inactive. Lacks the conserved Asp active site at position 476, which is replaced by an Asn residue.</text>
</comment>
<comment type="similarity">
    <text evidence="2">Belongs to the protein kinase superfamily. Ser/Thr protein kinase family.</text>
</comment>
<organism>
    <name type="scientific">Arabidopsis thaliana</name>
    <name type="common">Mouse-ear cress</name>
    <dbReference type="NCBI Taxonomy" id="3702"/>
    <lineage>
        <taxon>Eukaryota</taxon>
        <taxon>Viridiplantae</taxon>
        <taxon>Streptophyta</taxon>
        <taxon>Embryophyta</taxon>
        <taxon>Tracheophyta</taxon>
        <taxon>Spermatophyta</taxon>
        <taxon>Magnoliopsida</taxon>
        <taxon>eudicotyledons</taxon>
        <taxon>Gunneridae</taxon>
        <taxon>Pentapetalae</taxon>
        <taxon>rosids</taxon>
        <taxon>malvids</taxon>
        <taxon>Brassicales</taxon>
        <taxon>Brassicaceae</taxon>
        <taxon>Camelineae</taxon>
        <taxon>Arabidopsis</taxon>
    </lineage>
</organism>
<evidence type="ECO:0000255" key="1"/>
<evidence type="ECO:0000255" key="2">
    <source>
        <dbReference type="PROSITE-ProRule" id="PRU00159"/>
    </source>
</evidence>
<evidence type="ECO:0000305" key="3"/>
<proteinExistence type="inferred from homology"/>
<keyword id="KW-0067">ATP-binding</keyword>
<keyword id="KW-0325">Glycoprotein</keyword>
<keyword id="KW-0472">Membrane</keyword>
<keyword id="KW-0547">Nucleotide-binding</keyword>
<keyword id="KW-0675">Receptor</keyword>
<keyword id="KW-1185">Reference proteome</keyword>
<keyword id="KW-0732">Signal</keyword>
<keyword id="KW-0812">Transmembrane</keyword>
<keyword id="KW-1133">Transmembrane helix</keyword>
<protein>
    <recommendedName>
        <fullName>Probably inactive receptor-like protein kinase At2g46850</fullName>
    </recommendedName>
</protein>
<accession>Q8S8N4</accession>
<dbReference type="EMBL" id="AC005310">
    <property type="protein sequence ID" value="AAM15020.1"/>
    <property type="molecule type" value="Genomic_DNA"/>
</dbReference>
<dbReference type="EMBL" id="CP002685">
    <property type="protein sequence ID" value="AEC10763.1"/>
    <property type="molecule type" value="Genomic_DNA"/>
</dbReference>
<dbReference type="PIR" id="T02686">
    <property type="entry name" value="T02686"/>
</dbReference>
<dbReference type="RefSeq" id="NP_182208.1">
    <property type="nucleotide sequence ID" value="NM_130252.3"/>
</dbReference>
<dbReference type="SMR" id="Q8S8N4"/>
<dbReference type="GlyGen" id="Q8S8N4">
    <property type="glycosylation" value="3 sites"/>
</dbReference>
<dbReference type="PaxDb" id="3702-AT2G46850.1"/>
<dbReference type="ProteomicsDB" id="232471"/>
<dbReference type="EnsemblPlants" id="AT2G46850.1">
    <property type="protein sequence ID" value="AT2G46850.1"/>
    <property type="gene ID" value="AT2G46850"/>
</dbReference>
<dbReference type="GeneID" id="819298"/>
<dbReference type="Gramene" id="AT2G46850.1">
    <property type="protein sequence ID" value="AT2G46850.1"/>
    <property type="gene ID" value="AT2G46850"/>
</dbReference>
<dbReference type="KEGG" id="ath:AT2G46850"/>
<dbReference type="Araport" id="AT2G46850"/>
<dbReference type="TAIR" id="AT2G46850"/>
<dbReference type="eggNOG" id="KOG1187">
    <property type="taxonomic scope" value="Eukaryota"/>
</dbReference>
<dbReference type="HOGENOM" id="CLU_000288_43_5_1"/>
<dbReference type="InParanoid" id="Q8S8N4"/>
<dbReference type="OMA" id="WVKNRSA"/>
<dbReference type="OrthoDB" id="1847747at2759"/>
<dbReference type="PhylomeDB" id="Q8S8N4"/>
<dbReference type="PRO" id="PR:Q8S8N4"/>
<dbReference type="Proteomes" id="UP000006548">
    <property type="component" value="Chromosome 2"/>
</dbReference>
<dbReference type="ExpressionAtlas" id="Q8S8N4">
    <property type="expression patterns" value="baseline and differential"/>
</dbReference>
<dbReference type="GO" id="GO:0016020">
    <property type="term" value="C:membrane"/>
    <property type="evidence" value="ECO:0007669"/>
    <property type="project" value="UniProtKB-SubCell"/>
</dbReference>
<dbReference type="GO" id="GO:0005524">
    <property type="term" value="F:ATP binding"/>
    <property type="evidence" value="ECO:0007669"/>
    <property type="project" value="UniProtKB-KW"/>
</dbReference>
<dbReference type="GO" id="GO:0030247">
    <property type="term" value="F:polysaccharide binding"/>
    <property type="evidence" value="ECO:0007669"/>
    <property type="project" value="InterPro"/>
</dbReference>
<dbReference type="GO" id="GO:0004672">
    <property type="term" value="F:protein kinase activity"/>
    <property type="evidence" value="ECO:0007669"/>
    <property type="project" value="InterPro"/>
</dbReference>
<dbReference type="FunFam" id="3.30.200.20:FF:000777">
    <property type="entry name" value="probably inactive receptor-like protein kinase At2g46850"/>
    <property type="match status" value="1"/>
</dbReference>
<dbReference type="Gene3D" id="2.10.25.10">
    <property type="entry name" value="Laminin"/>
    <property type="match status" value="1"/>
</dbReference>
<dbReference type="Gene3D" id="3.30.200.20">
    <property type="entry name" value="Phosphorylase Kinase, domain 1"/>
    <property type="match status" value="1"/>
</dbReference>
<dbReference type="Gene3D" id="1.10.510.10">
    <property type="entry name" value="Transferase(Phosphotransferase) domain 1"/>
    <property type="match status" value="1"/>
</dbReference>
<dbReference type="InterPro" id="IPR011009">
    <property type="entry name" value="Kinase-like_dom_sf"/>
</dbReference>
<dbReference type="InterPro" id="IPR000719">
    <property type="entry name" value="Prot_kinase_dom"/>
</dbReference>
<dbReference type="InterPro" id="IPR001245">
    <property type="entry name" value="Ser-Thr/Tyr_kinase_cat_dom"/>
</dbReference>
<dbReference type="InterPro" id="IPR025287">
    <property type="entry name" value="WAK_GUB"/>
</dbReference>
<dbReference type="PANTHER" id="PTHR46008">
    <property type="entry name" value="LEAF RUST 10 DISEASE-RESISTANCE LOCUS RECEPTOR-LIKE PROTEIN KINASE-LIKE 1.4"/>
    <property type="match status" value="1"/>
</dbReference>
<dbReference type="PANTHER" id="PTHR46008:SF2">
    <property type="entry name" value="LEAF RUST 10 DISEASE-RESISTANCE LOCUS RECEPTOR-LIKE PROTEIN KINASE-LIKE 1.4"/>
    <property type="match status" value="1"/>
</dbReference>
<dbReference type="Pfam" id="PF13947">
    <property type="entry name" value="GUB_WAK_bind"/>
    <property type="match status" value="1"/>
</dbReference>
<dbReference type="Pfam" id="PF07714">
    <property type="entry name" value="PK_Tyr_Ser-Thr"/>
    <property type="match status" value="1"/>
</dbReference>
<dbReference type="SUPFAM" id="SSF56112">
    <property type="entry name" value="Protein kinase-like (PK-like)"/>
    <property type="match status" value="1"/>
</dbReference>
<dbReference type="PROSITE" id="PS50011">
    <property type="entry name" value="PROTEIN_KINASE_DOM"/>
    <property type="match status" value="1"/>
</dbReference>
<sequence length="633" mass="70166">MPPLFLPSSSSALFLLLLLLLTLQTLTSISLSQPQALRSPEKCGNFSVSFPFQLSSSSSAAAFRLSCENSSTLFLHINHQSYRIIEFFTDGLLVDFPSSPSCRQFNDLRSFPFSANQFFSISFENVIGLYDCEDSSLCKFGCETNDLFGCDGREEDETSGGDIGCCYPLSDHSAWRVGDDFSVFSRYGCRGFSSWLVPRGTNRGKRGVKLEWAIPRNSPEAICDREARTVNATAIEGSVRCVCRDGFVGDGFLHGTGCLKSCFKDGKELYGDKCKIKKHNGKKLTVLAGVLAPLFILGSLLALFCLLKRPVTSHKDQQFDISTTTTTTNSVSFRKGYNKTRLFTYRELEEATKGFQDSQKLTQGKTGTIYSGNLTNGTRVIVHKVLCENQIEFMEISSQIDHLSAVLHRNLARIIGFCMDIGYNPLVVYEYPVNGSLGDRLRLGLDWCKRVNIVAEVAGLLALLQYENYPPILHTNISSGNIFLDEDFQAKVTGFGLQRKQRIDTSMYDFAVLLLEIVTGLKQREETVTQALQKIRSGKLEEIVDPSMYFHEQPVAFREQIGLVADIATRCVLFGGDGKFGMVDAARELLQIAGNNGGGGCDKKRDGIEETFSNSSLLQMISMSPDSIYLPKT</sequence>
<feature type="signal peptide" evidence="1">
    <location>
        <begin position="1"/>
        <end position="28"/>
    </location>
</feature>
<feature type="chain" id="PRO_0000389475" description="Probably inactive receptor-like protein kinase At2g46850">
    <location>
        <begin position="29"/>
        <end position="633"/>
    </location>
</feature>
<feature type="topological domain" description="Extracellular" evidence="1">
    <location>
        <begin position="29"/>
        <end position="285"/>
    </location>
</feature>
<feature type="transmembrane region" description="Helical" evidence="1">
    <location>
        <begin position="286"/>
        <end position="306"/>
    </location>
</feature>
<feature type="topological domain" description="Cytoplasmic" evidence="1">
    <location>
        <begin position="307"/>
        <end position="633"/>
    </location>
</feature>
<feature type="domain" description="Protein kinase" evidence="2">
    <location>
        <begin position="355"/>
        <end position="633"/>
    </location>
</feature>
<feature type="binding site" evidence="2">
    <location>
        <begin position="361"/>
        <end position="369"/>
    </location>
    <ligand>
        <name>ATP</name>
        <dbReference type="ChEBI" id="CHEBI:30616"/>
    </ligand>
</feature>
<feature type="binding site" evidence="2">
    <location>
        <position position="384"/>
    </location>
    <ligand>
        <name>ATP</name>
        <dbReference type="ChEBI" id="CHEBI:30616"/>
    </ligand>
</feature>
<feature type="glycosylation site" description="N-linked (GlcNAc...) asparagine" evidence="1">
    <location>
        <position position="45"/>
    </location>
</feature>
<feature type="glycosylation site" description="N-linked (GlcNAc...) asparagine" evidence="1">
    <location>
        <position position="69"/>
    </location>
</feature>
<feature type="glycosylation site" description="N-linked (GlcNAc...) asparagine" evidence="1">
    <location>
        <position position="231"/>
    </location>
</feature>
<reference key="1">
    <citation type="journal article" date="1999" name="Nature">
        <title>Sequence and analysis of chromosome 2 of the plant Arabidopsis thaliana.</title>
        <authorList>
            <person name="Lin X."/>
            <person name="Kaul S."/>
            <person name="Rounsley S.D."/>
            <person name="Shea T.P."/>
            <person name="Benito M.-I."/>
            <person name="Town C.D."/>
            <person name="Fujii C.Y."/>
            <person name="Mason T.M."/>
            <person name="Bowman C.L."/>
            <person name="Barnstead M.E."/>
            <person name="Feldblyum T.V."/>
            <person name="Buell C.R."/>
            <person name="Ketchum K.A."/>
            <person name="Lee J.J."/>
            <person name="Ronning C.M."/>
            <person name="Koo H.L."/>
            <person name="Moffat K.S."/>
            <person name="Cronin L.A."/>
            <person name="Shen M."/>
            <person name="Pai G."/>
            <person name="Van Aken S."/>
            <person name="Umayam L."/>
            <person name="Tallon L.J."/>
            <person name="Gill J.E."/>
            <person name="Adams M.D."/>
            <person name="Carrera A.J."/>
            <person name="Creasy T.H."/>
            <person name="Goodman H.M."/>
            <person name="Somerville C.R."/>
            <person name="Copenhaver G.P."/>
            <person name="Preuss D."/>
            <person name="Nierman W.C."/>
            <person name="White O."/>
            <person name="Eisen J.A."/>
            <person name="Salzberg S.L."/>
            <person name="Fraser C.M."/>
            <person name="Venter J.C."/>
        </authorList>
    </citation>
    <scope>NUCLEOTIDE SEQUENCE [LARGE SCALE GENOMIC DNA]</scope>
    <source>
        <strain>cv. Columbia</strain>
    </source>
</reference>
<reference key="2">
    <citation type="journal article" date="2017" name="Plant J.">
        <title>Araport11: a complete reannotation of the Arabidopsis thaliana reference genome.</title>
        <authorList>
            <person name="Cheng C.Y."/>
            <person name="Krishnakumar V."/>
            <person name="Chan A.P."/>
            <person name="Thibaud-Nissen F."/>
            <person name="Schobel S."/>
            <person name="Town C.D."/>
        </authorList>
    </citation>
    <scope>GENOME REANNOTATION</scope>
    <source>
        <strain>cv. Columbia</strain>
    </source>
</reference>
<name>Y2685_ARATH</name>